<evidence type="ECO:0000255" key="1">
    <source>
        <dbReference type="HAMAP-Rule" id="MF_01274"/>
    </source>
</evidence>
<gene>
    <name evidence="1" type="primary">coaX</name>
    <name type="ordered locus">lpl0943</name>
</gene>
<name>COAX_LEGPL</name>
<protein>
    <recommendedName>
        <fullName evidence="1">Type III pantothenate kinase</fullName>
        <ecNumber evidence="1">2.7.1.33</ecNumber>
    </recommendedName>
    <alternativeName>
        <fullName evidence="1">PanK-III</fullName>
    </alternativeName>
    <alternativeName>
        <fullName evidence="1">Pantothenic acid kinase</fullName>
    </alternativeName>
</protein>
<feature type="chain" id="PRO_0000267551" description="Type III pantothenate kinase">
    <location>
        <begin position="1"/>
        <end position="256"/>
    </location>
</feature>
<feature type="active site" description="Proton acceptor" evidence="1">
    <location>
        <position position="108"/>
    </location>
</feature>
<feature type="binding site" evidence="1">
    <location>
        <begin position="6"/>
        <end position="13"/>
    </location>
    <ligand>
        <name>ATP</name>
        <dbReference type="ChEBI" id="CHEBI:30616"/>
    </ligand>
</feature>
<feature type="binding site" evidence="1">
    <location>
        <position position="99"/>
    </location>
    <ligand>
        <name>substrate</name>
    </ligand>
</feature>
<feature type="binding site" evidence="1">
    <location>
        <begin position="106"/>
        <end position="109"/>
    </location>
    <ligand>
        <name>substrate</name>
    </ligand>
</feature>
<feature type="binding site" evidence="1">
    <location>
        <position position="129"/>
    </location>
    <ligand>
        <name>K(+)</name>
        <dbReference type="ChEBI" id="CHEBI:29103"/>
    </ligand>
</feature>
<feature type="binding site" evidence="1">
    <location>
        <position position="132"/>
    </location>
    <ligand>
        <name>ATP</name>
        <dbReference type="ChEBI" id="CHEBI:30616"/>
    </ligand>
</feature>
<feature type="binding site" evidence="1">
    <location>
        <position position="184"/>
    </location>
    <ligand>
        <name>substrate</name>
    </ligand>
</feature>
<accession>Q5WXZ6</accession>
<dbReference type="EC" id="2.7.1.33" evidence="1"/>
<dbReference type="EMBL" id="CR628337">
    <property type="protein sequence ID" value="CAH15177.1"/>
    <property type="molecule type" value="Genomic_DNA"/>
</dbReference>
<dbReference type="RefSeq" id="WP_011215084.1">
    <property type="nucleotide sequence ID" value="NC_006369.1"/>
</dbReference>
<dbReference type="SMR" id="Q5WXZ6"/>
<dbReference type="DNASU" id="3115443"/>
<dbReference type="KEGG" id="lpf:lpl0943"/>
<dbReference type="LegioList" id="lpl0943"/>
<dbReference type="HOGENOM" id="CLU_066627_1_0_6"/>
<dbReference type="UniPathway" id="UPA00241">
    <property type="reaction ID" value="UER00352"/>
</dbReference>
<dbReference type="Proteomes" id="UP000002517">
    <property type="component" value="Chromosome"/>
</dbReference>
<dbReference type="GO" id="GO:0005737">
    <property type="term" value="C:cytoplasm"/>
    <property type="evidence" value="ECO:0007669"/>
    <property type="project" value="UniProtKB-SubCell"/>
</dbReference>
<dbReference type="GO" id="GO:0005524">
    <property type="term" value="F:ATP binding"/>
    <property type="evidence" value="ECO:0007669"/>
    <property type="project" value="UniProtKB-UniRule"/>
</dbReference>
<dbReference type="GO" id="GO:0046872">
    <property type="term" value="F:metal ion binding"/>
    <property type="evidence" value="ECO:0007669"/>
    <property type="project" value="UniProtKB-KW"/>
</dbReference>
<dbReference type="GO" id="GO:0004594">
    <property type="term" value="F:pantothenate kinase activity"/>
    <property type="evidence" value="ECO:0007669"/>
    <property type="project" value="UniProtKB-UniRule"/>
</dbReference>
<dbReference type="GO" id="GO:0015937">
    <property type="term" value="P:coenzyme A biosynthetic process"/>
    <property type="evidence" value="ECO:0007669"/>
    <property type="project" value="UniProtKB-UniRule"/>
</dbReference>
<dbReference type="CDD" id="cd24015">
    <property type="entry name" value="ASKHA_NBD_PanK-III"/>
    <property type="match status" value="1"/>
</dbReference>
<dbReference type="Gene3D" id="3.30.420.40">
    <property type="match status" value="2"/>
</dbReference>
<dbReference type="HAMAP" id="MF_01274">
    <property type="entry name" value="Pantothen_kinase_3"/>
    <property type="match status" value="1"/>
</dbReference>
<dbReference type="InterPro" id="IPR043129">
    <property type="entry name" value="ATPase_NBD"/>
</dbReference>
<dbReference type="InterPro" id="IPR004619">
    <property type="entry name" value="Type_III_PanK"/>
</dbReference>
<dbReference type="NCBIfam" id="TIGR00671">
    <property type="entry name" value="baf"/>
    <property type="match status" value="1"/>
</dbReference>
<dbReference type="NCBIfam" id="NF009855">
    <property type="entry name" value="PRK13321.1"/>
    <property type="match status" value="1"/>
</dbReference>
<dbReference type="PANTHER" id="PTHR34265">
    <property type="entry name" value="TYPE III PANTOTHENATE KINASE"/>
    <property type="match status" value="1"/>
</dbReference>
<dbReference type="PANTHER" id="PTHR34265:SF1">
    <property type="entry name" value="TYPE III PANTOTHENATE KINASE"/>
    <property type="match status" value="1"/>
</dbReference>
<dbReference type="Pfam" id="PF03309">
    <property type="entry name" value="Pan_kinase"/>
    <property type="match status" value="1"/>
</dbReference>
<dbReference type="SUPFAM" id="SSF53067">
    <property type="entry name" value="Actin-like ATPase domain"/>
    <property type="match status" value="2"/>
</dbReference>
<keyword id="KW-0067">ATP-binding</keyword>
<keyword id="KW-0173">Coenzyme A biosynthesis</keyword>
<keyword id="KW-0963">Cytoplasm</keyword>
<keyword id="KW-0418">Kinase</keyword>
<keyword id="KW-0479">Metal-binding</keyword>
<keyword id="KW-0547">Nucleotide-binding</keyword>
<keyword id="KW-0630">Potassium</keyword>
<keyword id="KW-0808">Transferase</keyword>
<comment type="function">
    <text evidence="1">Catalyzes the phosphorylation of pantothenate (Pan), the first step in CoA biosynthesis.</text>
</comment>
<comment type="catalytic activity">
    <reaction evidence="1">
        <text>(R)-pantothenate + ATP = (R)-4'-phosphopantothenate + ADP + H(+)</text>
        <dbReference type="Rhea" id="RHEA:16373"/>
        <dbReference type="ChEBI" id="CHEBI:10986"/>
        <dbReference type="ChEBI" id="CHEBI:15378"/>
        <dbReference type="ChEBI" id="CHEBI:29032"/>
        <dbReference type="ChEBI" id="CHEBI:30616"/>
        <dbReference type="ChEBI" id="CHEBI:456216"/>
        <dbReference type="EC" id="2.7.1.33"/>
    </reaction>
</comment>
<comment type="cofactor">
    <cofactor evidence="1">
        <name>NH4(+)</name>
        <dbReference type="ChEBI" id="CHEBI:28938"/>
    </cofactor>
    <cofactor evidence="1">
        <name>K(+)</name>
        <dbReference type="ChEBI" id="CHEBI:29103"/>
    </cofactor>
    <text evidence="1">A monovalent cation. Ammonium or potassium.</text>
</comment>
<comment type="pathway">
    <text evidence="1">Cofactor biosynthesis; coenzyme A biosynthesis; CoA from (R)-pantothenate: step 1/5.</text>
</comment>
<comment type="subunit">
    <text evidence="1">Homodimer.</text>
</comment>
<comment type="subcellular location">
    <subcellularLocation>
        <location evidence="1">Cytoplasm</location>
    </subcellularLocation>
</comment>
<comment type="similarity">
    <text evidence="1">Belongs to the type III pantothenate kinase family.</text>
</comment>
<proteinExistence type="inferred from homology"/>
<organism>
    <name type="scientific">Legionella pneumophila (strain Lens)</name>
    <dbReference type="NCBI Taxonomy" id="297245"/>
    <lineage>
        <taxon>Bacteria</taxon>
        <taxon>Pseudomonadati</taxon>
        <taxon>Pseudomonadota</taxon>
        <taxon>Gammaproteobacteria</taxon>
        <taxon>Legionellales</taxon>
        <taxon>Legionellaceae</taxon>
        <taxon>Legionella</taxon>
    </lineage>
</organism>
<sequence>MILCIDVGNSHIYGGVFDGDEIKLRFRHTSKVSTSDELGIFLKSVLRENNCSPETIRKIAICSVVPQVDYSLRSACVKYFSIDPFLLQAGVKTGLNIKYRNPVEVGADRIANAIAATHSFPNQNIIVIDFGTATTFCAISHKKAYLGGAILPGLRLSADALSKNTAKLPSVEIIKTESVVGRSTIESIQSGVYYGVLGACKELIQRIHHEAFNGDKILILATGGFASLFDKQGLYDHLVPDLVLQGIRLAAMMNTA</sequence>
<reference key="1">
    <citation type="journal article" date="2004" name="Nat. Genet.">
        <title>Evidence in the Legionella pneumophila genome for exploitation of host cell functions and high genome plasticity.</title>
        <authorList>
            <person name="Cazalet C."/>
            <person name="Rusniok C."/>
            <person name="Brueggemann H."/>
            <person name="Zidane N."/>
            <person name="Magnier A."/>
            <person name="Ma L."/>
            <person name="Tichit M."/>
            <person name="Jarraud S."/>
            <person name="Bouchier C."/>
            <person name="Vandenesch F."/>
            <person name="Kunst F."/>
            <person name="Etienne J."/>
            <person name="Glaser P."/>
            <person name="Buchrieser C."/>
        </authorList>
    </citation>
    <scope>NUCLEOTIDE SEQUENCE [LARGE SCALE GENOMIC DNA]</scope>
    <source>
        <strain>Lens</strain>
    </source>
</reference>